<proteinExistence type="inferred from homology"/>
<comment type="function">
    <text evidence="1">Single strand-specific metallo-endoribonuclease involved in late-stage 70S ribosome quality control and in maturation of the 3' terminus of the 16S rRNA.</text>
</comment>
<comment type="cofactor">
    <cofactor evidence="1">
        <name>Zn(2+)</name>
        <dbReference type="ChEBI" id="CHEBI:29105"/>
    </cofactor>
    <text evidence="1">Binds 1 zinc ion.</text>
</comment>
<comment type="subcellular location">
    <subcellularLocation>
        <location evidence="1">Cytoplasm</location>
    </subcellularLocation>
</comment>
<comment type="similarity">
    <text evidence="1">Belongs to the endoribonuclease YbeY family.</text>
</comment>
<sequence length="158" mass="17951">MKQVIIDLQLVCENTDNLPSEAQIQAWANRAIQPEFSDVEMTVRIVDEAESHDLNLTYRGKDKPTNVLSFPFECPDEVELSLLGDLVICRQVVEKEAEEQGKPLMAHWAHMVVHGCLHLLGYDHIEDAEAEEMEGLETEIMQSLGFDDPYLSEKEMHG</sequence>
<reference key="1">
    <citation type="journal article" date="2001" name="Proc. Natl. Acad. Sci. U.S.A.">
        <title>Complete genomic sequence of Pasteurella multocida Pm70.</title>
        <authorList>
            <person name="May B.J."/>
            <person name="Zhang Q."/>
            <person name="Li L.L."/>
            <person name="Paustian M.L."/>
            <person name="Whittam T.S."/>
            <person name="Kapur V."/>
        </authorList>
    </citation>
    <scope>NUCLEOTIDE SEQUENCE [LARGE SCALE GENOMIC DNA]</scope>
    <source>
        <strain>Pm70</strain>
    </source>
</reference>
<organism>
    <name type="scientific">Pasteurella multocida (strain Pm70)</name>
    <dbReference type="NCBI Taxonomy" id="272843"/>
    <lineage>
        <taxon>Bacteria</taxon>
        <taxon>Pseudomonadati</taxon>
        <taxon>Pseudomonadota</taxon>
        <taxon>Gammaproteobacteria</taxon>
        <taxon>Pasteurellales</taxon>
        <taxon>Pasteurellaceae</taxon>
        <taxon>Pasteurella</taxon>
    </lineage>
</organism>
<gene>
    <name evidence="1" type="primary">ybeY</name>
    <name type="ordered locus">PM1045</name>
</gene>
<protein>
    <recommendedName>
        <fullName evidence="1">Endoribonuclease YbeY</fullName>
        <ecNumber evidence="1">3.1.-.-</ecNumber>
    </recommendedName>
</protein>
<accession>P57900</accession>
<feature type="chain" id="PRO_0000102502" description="Endoribonuclease YbeY">
    <location>
        <begin position="1"/>
        <end position="158"/>
    </location>
</feature>
<feature type="binding site" evidence="1">
    <location>
        <position position="114"/>
    </location>
    <ligand>
        <name>Zn(2+)</name>
        <dbReference type="ChEBI" id="CHEBI:29105"/>
        <note>catalytic</note>
    </ligand>
</feature>
<feature type="binding site" evidence="1">
    <location>
        <position position="118"/>
    </location>
    <ligand>
        <name>Zn(2+)</name>
        <dbReference type="ChEBI" id="CHEBI:29105"/>
        <note>catalytic</note>
    </ligand>
</feature>
<feature type="binding site" evidence="1">
    <location>
        <position position="124"/>
    </location>
    <ligand>
        <name>Zn(2+)</name>
        <dbReference type="ChEBI" id="CHEBI:29105"/>
        <note>catalytic</note>
    </ligand>
</feature>
<keyword id="KW-0963">Cytoplasm</keyword>
<keyword id="KW-0255">Endonuclease</keyword>
<keyword id="KW-0378">Hydrolase</keyword>
<keyword id="KW-0479">Metal-binding</keyword>
<keyword id="KW-0540">Nuclease</keyword>
<keyword id="KW-1185">Reference proteome</keyword>
<keyword id="KW-0690">Ribosome biogenesis</keyword>
<keyword id="KW-0698">rRNA processing</keyword>
<keyword id="KW-0862">Zinc</keyword>
<dbReference type="EC" id="3.1.-.-" evidence="1"/>
<dbReference type="EMBL" id="AE004439">
    <property type="protein sequence ID" value="AAK03129.1"/>
    <property type="molecule type" value="Genomic_DNA"/>
</dbReference>
<dbReference type="RefSeq" id="WP_010906987.1">
    <property type="nucleotide sequence ID" value="NC_002663.1"/>
</dbReference>
<dbReference type="SMR" id="P57900"/>
<dbReference type="STRING" id="272843.PM1045"/>
<dbReference type="EnsemblBacteria" id="AAK03129">
    <property type="protein sequence ID" value="AAK03129"/>
    <property type="gene ID" value="PM1045"/>
</dbReference>
<dbReference type="KEGG" id="pmu:PM1045"/>
<dbReference type="PATRIC" id="fig|272843.6.peg.1059"/>
<dbReference type="HOGENOM" id="CLU_106710_0_1_6"/>
<dbReference type="OrthoDB" id="9807740at2"/>
<dbReference type="Proteomes" id="UP000000809">
    <property type="component" value="Chromosome"/>
</dbReference>
<dbReference type="GO" id="GO:0005737">
    <property type="term" value="C:cytoplasm"/>
    <property type="evidence" value="ECO:0007669"/>
    <property type="project" value="UniProtKB-SubCell"/>
</dbReference>
<dbReference type="GO" id="GO:0004222">
    <property type="term" value="F:metalloendopeptidase activity"/>
    <property type="evidence" value="ECO:0007669"/>
    <property type="project" value="InterPro"/>
</dbReference>
<dbReference type="GO" id="GO:0004521">
    <property type="term" value="F:RNA endonuclease activity"/>
    <property type="evidence" value="ECO:0007669"/>
    <property type="project" value="UniProtKB-UniRule"/>
</dbReference>
<dbReference type="GO" id="GO:0008270">
    <property type="term" value="F:zinc ion binding"/>
    <property type="evidence" value="ECO:0007669"/>
    <property type="project" value="UniProtKB-UniRule"/>
</dbReference>
<dbReference type="GO" id="GO:0006364">
    <property type="term" value="P:rRNA processing"/>
    <property type="evidence" value="ECO:0007669"/>
    <property type="project" value="UniProtKB-UniRule"/>
</dbReference>
<dbReference type="Gene3D" id="3.40.390.30">
    <property type="entry name" value="Metalloproteases ('zincins'), catalytic domain"/>
    <property type="match status" value="1"/>
</dbReference>
<dbReference type="HAMAP" id="MF_00009">
    <property type="entry name" value="Endoribonucl_YbeY"/>
    <property type="match status" value="1"/>
</dbReference>
<dbReference type="InterPro" id="IPR023091">
    <property type="entry name" value="MetalPrtase_cat_dom_sf_prd"/>
</dbReference>
<dbReference type="InterPro" id="IPR002036">
    <property type="entry name" value="YbeY"/>
</dbReference>
<dbReference type="InterPro" id="IPR020549">
    <property type="entry name" value="YbeY_CS"/>
</dbReference>
<dbReference type="NCBIfam" id="TIGR00043">
    <property type="entry name" value="rRNA maturation RNase YbeY"/>
    <property type="match status" value="1"/>
</dbReference>
<dbReference type="PANTHER" id="PTHR46986">
    <property type="entry name" value="ENDORIBONUCLEASE YBEY, CHLOROPLASTIC"/>
    <property type="match status" value="1"/>
</dbReference>
<dbReference type="PANTHER" id="PTHR46986:SF1">
    <property type="entry name" value="ENDORIBONUCLEASE YBEY, CHLOROPLASTIC"/>
    <property type="match status" value="1"/>
</dbReference>
<dbReference type="Pfam" id="PF02130">
    <property type="entry name" value="YbeY"/>
    <property type="match status" value="1"/>
</dbReference>
<dbReference type="SUPFAM" id="SSF55486">
    <property type="entry name" value="Metalloproteases ('zincins'), catalytic domain"/>
    <property type="match status" value="1"/>
</dbReference>
<dbReference type="PROSITE" id="PS01306">
    <property type="entry name" value="UPF0054"/>
    <property type="match status" value="1"/>
</dbReference>
<evidence type="ECO:0000255" key="1">
    <source>
        <dbReference type="HAMAP-Rule" id="MF_00009"/>
    </source>
</evidence>
<name>YBEY_PASMU</name>